<accession>A8ETF2</accession>
<keyword id="KW-0067">ATP-binding</keyword>
<keyword id="KW-0418">Kinase</keyword>
<keyword id="KW-0545">Nucleotide biosynthesis</keyword>
<keyword id="KW-0547">Nucleotide-binding</keyword>
<keyword id="KW-1185">Reference proteome</keyword>
<keyword id="KW-0808">Transferase</keyword>
<comment type="function">
    <text evidence="1">Phosphorylation of dTMP to form dTDP in both de novo and salvage pathways of dTTP synthesis.</text>
</comment>
<comment type="catalytic activity">
    <reaction evidence="1">
        <text>dTMP + ATP = dTDP + ADP</text>
        <dbReference type="Rhea" id="RHEA:13517"/>
        <dbReference type="ChEBI" id="CHEBI:30616"/>
        <dbReference type="ChEBI" id="CHEBI:58369"/>
        <dbReference type="ChEBI" id="CHEBI:63528"/>
        <dbReference type="ChEBI" id="CHEBI:456216"/>
        <dbReference type="EC" id="2.7.4.9"/>
    </reaction>
</comment>
<comment type="similarity">
    <text evidence="1">Belongs to the thymidylate kinase family.</text>
</comment>
<dbReference type="EC" id="2.7.4.9" evidence="1"/>
<dbReference type="EMBL" id="CP000361">
    <property type="protein sequence ID" value="ABV67226.1"/>
    <property type="molecule type" value="Genomic_DNA"/>
</dbReference>
<dbReference type="RefSeq" id="WP_012012688.1">
    <property type="nucleotide sequence ID" value="NC_009850.1"/>
</dbReference>
<dbReference type="SMR" id="A8ETF2"/>
<dbReference type="STRING" id="367737.Abu_0966"/>
<dbReference type="GeneID" id="24304575"/>
<dbReference type="KEGG" id="abu:Abu_0966"/>
<dbReference type="eggNOG" id="COG0125">
    <property type="taxonomic scope" value="Bacteria"/>
</dbReference>
<dbReference type="HOGENOM" id="CLU_049131_0_0_7"/>
<dbReference type="Proteomes" id="UP000001136">
    <property type="component" value="Chromosome"/>
</dbReference>
<dbReference type="GO" id="GO:0005829">
    <property type="term" value="C:cytosol"/>
    <property type="evidence" value="ECO:0007669"/>
    <property type="project" value="TreeGrafter"/>
</dbReference>
<dbReference type="GO" id="GO:0005524">
    <property type="term" value="F:ATP binding"/>
    <property type="evidence" value="ECO:0007669"/>
    <property type="project" value="UniProtKB-UniRule"/>
</dbReference>
<dbReference type="GO" id="GO:0004798">
    <property type="term" value="F:dTMP kinase activity"/>
    <property type="evidence" value="ECO:0007669"/>
    <property type="project" value="UniProtKB-UniRule"/>
</dbReference>
<dbReference type="GO" id="GO:0006233">
    <property type="term" value="P:dTDP biosynthetic process"/>
    <property type="evidence" value="ECO:0007669"/>
    <property type="project" value="InterPro"/>
</dbReference>
<dbReference type="GO" id="GO:0006235">
    <property type="term" value="P:dTTP biosynthetic process"/>
    <property type="evidence" value="ECO:0007669"/>
    <property type="project" value="UniProtKB-UniRule"/>
</dbReference>
<dbReference type="GO" id="GO:0006227">
    <property type="term" value="P:dUDP biosynthetic process"/>
    <property type="evidence" value="ECO:0007669"/>
    <property type="project" value="TreeGrafter"/>
</dbReference>
<dbReference type="CDD" id="cd01672">
    <property type="entry name" value="TMPK"/>
    <property type="match status" value="1"/>
</dbReference>
<dbReference type="Gene3D" id="3.40.50.300">
    <property type="entry name" value="P-loop containing nucleotide triphosphate hydrolases"/>
    <property type="match status" value="1"/>
</dbReference>
<dbReference type="HAMAP" id="MF_00165">
    <property type="entry name" value="Thymidylate_kinase"/>
    <property type="match status" value="1"/>
</dbReference>
<dbReference type="InterPro" id="IPR027417">
    <property type="entry name" value="P-loop_NTPase"/>
</dbReference>
<dbReference type="InterPro" id="IPR039430">
    <property type="entry name" value="Thymidylate_kin-like_dom"/>
</dbReference>
<dbReference type="InterPro" id="IPR018094">
    <property type="entry name" value="Thymidylate_kinase"/>
</dbReference>
<dbReference type="NCBIfam" id="TIGR00041">
    <property type="entry name" value="DTMP_kinase"/>
    <property type="match status" value="1"/>
</dbReference>
<dbReference type="PANTHER" id="PTHR10344">
    <property type="entry name" value="THYMIDYLATE KINASE"/>
    <property type="match status" value="1"/>
</dbReference>
<dbReference type="PANTHER" id="PTHR10344:SF4">
    <property type="entry name" value="UMP-CMP KINASE 2, MITOCHONDRIAL"/>
    <property type="match status" value="1"/>
</dbReference>
<dbReference type="Pfam" id="PF02223">
    <property type="entry name" value="Thymidylate_kin"/>
    <property type="match status" value="1"/>
</dbReference>
<dbReference type="SUPFAM" id="SSF52540">
    <property type="entry name" value="P-loop containing nucleoside triphosphate hydrolases"/>
    <property type="match status" value="1"/>
</dbReference>
<dbReference type="PROSITE" id="PS01331">
    <property type="entry name" value="THYMIDYLATE_KINASE"/>
    <property type="match status" value="1"/>
</dbReference>
<sequence>MYVSIEGIDTAGKSTQLNILEKTFPNAIFTKEPGGTALGIKLRAMALGGEAKSSIAEMFLFLADRAEHIEEVIKPNKNSLVISDRSVVSGIAYANQFEIDKLIELNLIATSNILPTHIILLELTPEELKFRLSQKANDSIELRGIDYLINIQNRMKETIKKLNVNHIFIDASLKIEDIAKTIEDFLNVK</sequence>
<proteinExistence type="inferred from homology"/>
<reference key="1">
    <citation type="journal article" date="2007" name="PLoS ONE">
        <title>The complete genome sequence and analysis of the Epsilonproteobacterium Arcobacter butzleri.</title>
        <authorList>
            <person name="Miller W.G."/>
            <person name="Parker C.T."/>
            <person name="Rubenfield M."/>
            <person name="Mendz G.L."/>
            <person name="Woesten M.M.S.M."/>
            <person name="Ussery D.W."/>
            <person name="Stolz J.F."/>
            <person name="Binnewies T.T."/>
            <person name="Hallin P.F."/>
            <person name="Wang G."/>
            <person name="Malek J.A."/>
            <person name="Rogosin A."/>
            <person name="Stanker L.H."/>
            <person name="Mandrell R.E."/>
        </authorList>
    </citation>
    <scope>NUCLEOTIDE SEQUENCE [LARGE SCALE GENOMIC DNA]</scope>
    <source>
        <strain>RM4018</strain>
    </source>
</reference>
<gene>
    <name evidence="1" type="primary">tmk</name>
    <name type="ordered locus">Abu_0966</name>
</gene>
<evidence type="ECO:0000255" key="1">
    <source>
        <dbReference type="HAMAP-Rule" id="MF_00165"/>
    </source>
</evidence>
<feature type="chain" id="PRO_1000123554" description="Thymidylate kinase">
    <location>
        <begin position="1"/>
        <end position="189"/>
    </location>
</feature>
<feature type="binding site" evidence="1">
    <location>
        <begin position="7"/>
        <end position="14"/>
    </location>
    <ligand>
        <name>ATP</name>
        <dbReference type="ChEBI" id="CHEBI:30616"/>
    </ligand>
</feature>
<name>KTHY_ALIB4</name>
<protein>
    <recommendedName>
        <fullName evidence="1">Thymidylate kinase</fullName>
        <ecNumber evidence="1">2.7.4.9</ecNumber>
    </recommendedName>
    <alternativeName>
        <fullName evidence="1">dTMP kinase</fullName>
    </alternativeName>
</protein>
<organism>
    <name type="scientific">Aliarcobacter butzleri (strain RM4018)</name>
    <name type="common">Arcobacter butzleri</name>
    <dbReference type="NCBI Taxonomy" id="367737"/>
    <lineage>
        <taxon>Bacteria</taxon>
        <taxon>Pseudomonadati</taxon>
        <taxon>Campylobacterota</taxon>
        <taxon>Epsilonproteobacteria</taxon>
        <taxon>Campylobacterales</taxon>
        <taxon>Arcobacteraceae</taxon>
        <taxon>Aliarcobacter</taxon>
    </lineage>
</organism>